<dbReference type="EMBL" id="AF093749">
    <property type="protein sequence ID" value="AAC78126.1"/>
    <property type="molecule type" value="Genomic_DNA"/>
</dbReference>
<dbReference type="EMBL" id="AE006468">
    <property type="protein sequence ID" value="AAL21349.1"/>
    <property type="molecule type" value="Genomic_DNA"/>
</dbReference>
<dbReference type="RefSeq" id="NP_461390.1">
    <property type="nucleotide sequence ID" value="NC_003197.2"/>
</dbReference>
<dbReference type="RefSeq" id="WP_000606266.1">
    <property type="nucleotide sequence ID" value="NC_003197.2"/>
</dbReference>
<dbReference type="SMR" id="Q9ZFU8"/>
<dbReference type="STRING" id="99287.STM2455"/>
<dbReference type="PaxDb" id="99287-STM2455"/>
<dbReference type="GeneID" id="1253977"/>
<dbReference type="KEGG" id="stm:STM2455"/>
<dbReference type="PATRIC" id="fig|99287.12.peg.2593"/>
<dbReference type="HOGENOM" id="CLU_064903_7_0_6"/>
<dbReference type="OMA" id="WLIGGFK"/>
<dbReference type="PhylomeDB" id="Q9ZFU8"/>
<dbReference type="BioCyc" id="SENT99287:STM2455-MONOMER"/>
<dbReference type="UniPathway" id="UPA00560"/>
<dbReference type="Proteomes" id="UP000001014">
    <property type="component" value="Chromosome"/>
</dbReference>
<dbReference type="GO" id="GO:0031471">
    <property type="term" value="C:ethanolamine degradation polyhedral organelle"/>
    <property type="evidence" value="ECO:0000314"/>
    <property type="project" value="UniProtKB"/>
</dbReference>
<dbReference type="GO" id="GO:0046336">
    <property type="term" value="P:ethanolamine catabolic process"/>
    <property type="evidence" value="ECO:0007669"/>
    <property type="project" value="UniProtKB-UniPathway"/>
</dbReference>
<dbReference type="GO" id="GO:0006091">
    <property type="term" value="P:generation of precursor metabolites and energy"/>
    <property type="evidence" value="ECO:0000304"/>
    <property type="project" value="UniProtKB"/>
</dbReference>
<dbReference type="CDD" id="cd07045">
    <property type="entry name" value="BMC_CcmK_like"/>
    <property type="match status" value="1"/>
</dbReference>
<dbReference type="Gene3D" id="3.30.70.1710">
    <property type="match status" value="1"/>
</dbReference>
<dbReference type="Gene3D" id="1.10.10.10">
    <property type="entry name" value="Winged helix-like DNA-binding domain superfamily/Winged helix DNA-binding domain"/>
    <property type="match status" value="1"/>
</dbReference>
<dbReference type="InterPro" id="IPR020808">
    <property type="entry name" value="Bact_microcomp_CS"/>
</dbReference>
<dbReference type="InterPro" id="IPR000249">
    <property type="entry name" value="BMC_dom"/>
</dbReference>
<dbReference type="InterPro" id="IPR050575">
    <property type="entry name" value="BMC_shell"/>
</dbReference>
<dbReference type="InterPro" id="IPR037233">
    <property type="entry name" value="CcmK-like_sf"/>
</dbReference>
<dbReference type="InterPro" id="IPR044872">
    <property type="entry name" value="CcmK/CsoS1_BMC"/>
</dbReference>
<dbReference type="InterPro" id="IPR032298">
    <property type="entry name" value="EutK_C"/>
</dbReference>
<dbReference type="InterPro" id="IPR036388">
    <property type="entry name" value="WH-like_DNA-bd_sf"/>
</dbReference>
<dbReference type="NCBIfam" id="NF012010">
    <property type="entry name" value="PRK15466.1"/>
    <property type="match status" value="1"/>
</dbReference>
<dbReference type="PANTHER" id="PTHR33941:SF6">
    <property type="entry name" value="BACTERIAL MICROCOMPARTMENT SHELL PROTEIN EUTK"/>
    <property type="match status" value="1"/>
</dbReference>
<dbReference type="PANTHER" id="PTHR33941">
    <property type="entry name" value="PROPANEDIOL UTILIZATION PROTEIN PDUA"/>
    <property type="match status" value="1"/>
</dbReference>
<dbReference type="Pfam" id="PF00936">
    <property type="entry name" value="BMC"/>
    <property type="match status" value="1"/>
</dbReference>
<dbReference type="Pfam" id="PF16365">
    <property type="entry name" value="EutK_C"/>
    <property type="match status" value="1"/>
</dbReference>
<dbReference type="SMART" id="SM00877">
    <property type="entry name" value="BMC"/>
    <property type="match status" value="1"/>
</dbReference>
<dbReference type="SUPFAM" id="SSF143414">
    <property type="entry name" value="CcmK-like"/>
    <property type="match status" value="1"/>
</dbReference>
<dbReference type="PROSITE" id="PS01139">
    <property type="entry name" value="BMC_1"/>
    <property type="match status" value="1"/>
</dbReference>
<dbReference type="PROSITE" id="PS51930">
    <property type="entry name" value="BMC_2"/>
    <property type="match status" value="1"/>
</dbReference>
<dbReference type="PROSITE" id="PS51933">
    <property type="entry name" value="EUTK_C"/>
    <property type="match status" value="1"/>
</dbReference>
<name>EUTK_SALTY</name>
<sequence length="164" mass="17486">MINALGLLEVDGMVAAVDAADAMLKAANVRLLSHQVLDPGRLTLVVEGDLAACRAALDAGSAAAQRTGRVISRKEIGRPEEDTQWLIGGFARATTPTEKAPQVPATPEFAEALLALLASVRQGMTAGEVAAHFGWPLEQARNVLEQLFSDGALRKRSSRYRIKN</sequence>
<evidence type="ECO:0000250" key="1">
    <source>
        <dbReference type="UniProtKB" id="P76540"/>
    </source>
</evidence>
<evidence type="ECO:0000255" key="2">
    <source>
        <dbReference type="PROSITE-ProRule" id="PRU01278"/>
    </source>
</evidence>
<evidence type="ECO:0000255" key="3">
    <source>
        <dbReference type="PROSITE-ProRule" id="PRU01281"/>
    </source>
</evidence>
<evidence type="ECO:0000269" key="4">
    <source>
    </source>
</evidence>
<evidence type="ECO:0000269" key="5">
    <source>
    </source>
</evidence>
<evidence type="ECO:0000269" key="6">
    <source>
    </source>
</evidence>
<evidence type="ECO:0000269" key="7">
    <source>
    </source>
</evidence>
<evidence type="ECO:0000269" key="8">
    <source>
    </source>
</evidence>
<evidence type="ECO:0000269" key="9">
    <source>
    </source>
</evidence>
<evidence type="ECO:0000269" key="10">
    <source>
    </source>
</evidence>
<evidence type="ECO:0000269" key="11">
    <source>
    </source>
</evidence>
<evidence type="ECO:0000305" key="12"/>
<evidence type="ECO:0000305" key="13">
    <source>
    </source>
</evidence>
<evidence type="ECO:0000305" key="14">
    <source>
    </source>
</evidence>
<evidence type="ECO:0000305" key="15">
    <source>
    </source>
</evidence>
<proteinExistence type="evidence at protein level"/>
<organism>
    <name type="scientific">Salmonella typhimurium (strain LT2 / SGSC1412 / ATCC 700720)</name>
    <dbReference type="NCBI Taxonomy" id="99287"/>
    <lineage>
        <taxon>Bacteria</taxon>
        <taxon>Pseudomonadati</taxon>
        <taxon>Pseudomonadota</taxon>
        <taxon>Gammaproteobacteria</taxon>
        <taxon>Enterobacterales</taxon>
        <taxon>Enterobacteriaceae</taxon>
        <taxon>Salmonella</taxon>
    </lineage>
</organism>
<keyword id="KW-1283">Bacterial microcompartment</keyword>
<keyword id="KW-1185">Reference proteome</keyword>
<keyword id="KW-0843">Virulence</keyword>
<reference key="1">
    <citation type="journal article" date="1999" name="J. Bacteriol.">
        <title>The 17-gene ethanolamine (eut) operon of Salmonella typhimurium encodes five homologues of carboxysome shell proteins.</title>
        <authorList>
            <person name="Kofoid E.C."/>
            <person name="Rappleye C.A."/>
            <person name="Stojiljkovic I."/>
            <person name="Roth J.R."/>
        </authorList>
    </citation>
    <scope>NUCLEOTIDE SEQUENCE [GENOMIC DNA]</scope>
    <scope>POSSIBLE FUNCTION</scope>
    <scope>DISRUPTION PHENOTYPE</scope>
    <source>
        <strain>LT2</strain>
    </source>
</reference>
<reference key="2">
    <citation type="journal article" date="2001" name="Nature">
        <title>Complete genome sequence of Salmonella enterica serovar Typhimurium LT2.</title>
        <authorList>
            <person name="McClelland M."/>
            <person name="Sanderson K.E."/>
            <person name="Spieth J."/>
            <person name="Clifton S.W."/>
            <person name="Latreille P."/>
            <person name="Courtney L."/>
            <person name="Porwollik S."/>
            <person name="Ali J."/>
            <person name="Dante M."/>
            <person name="Du F."/>
            <person name="Hou S."/>
            <person name="Layman D."/>
            <person name="Leonard S."/>
            <person name="Nguyen C."/>
            <person name="Scott K."/>
            <person name="Holmes A."/>
            <person name="Grewal N."/>
            <person name="Mulvaney E."/>
            <person name="Ryan E."/>
            <person name="Sun H."/>
            <person name="Florea L."/>
            <person name="Miller W."/>
            <person name="Stoneking T."/>
            <person name="Nhan M."/>
            <person name="Waterston R."/>
            <person name="Wilson R.K."/>
        </authorList>
    </citation>
    <scope>NUCLEOTIDE SEQUENCE [LARGE SCALE GENOMIC DNA]</scope>
    <source>
        <strain>LT2 / SGSC1412 / ATCC 700720</strain>
    </source>
</reference>
<reference key="3">
    <citation type="journal article" date="1988" name="J. Bacteriol.">
        <title>Ethanolamine utilization in Salmonella typhimurium.</title>
        <authorList>
            <person name="Roof D.M."/>
            <person name="Roth J.R."/>
        </authorList>
    </citation>
    <scope>FUNCTION</scope>
    <scope>PATHWAY</scope>
    <scope>OPERON</scope>
    <scope>INDUCTION BY ETHANOLAMINE AND COBALAMIN</scope>
    <source>
        <strain>LT2</strain>
    </source>
</reference>
<reference key="4">
    <citation type="journal article" date="2005" name="J. Bacteriol.">
        <title>Minimal functions and physiological conditions required for growth of salmonella enterica on ethanolamine in the absence of the metabolosome.</title>
        <authorList>
            <person name="Brinsmade S.R."/>
            <person name="Paldon T."/>
            <person name="Escalante-Semerena J.C."/>
        </authorList>
    </citation>
    <scope>FUNCTION</scope>
    <scope>DISRUPTION PHENOTYPE</scope>
    <source>
        <strain>LT2</strain>
    </source>
</reference>
<reference key="5">
    <citation type="journal article" date="2006" name="J. Bacteriol.">
        <title>Conserving a volatile metabolite: a role for carboxysome-like organelles in Salmonella enterica.</title>
        <authorList>
            <person name="Penrod J.T."/>
            <person name="Roth J.R."/>
        </authorList>
    </citation>
    <scope>FUNCTION</scope>
    <scope>DISRUPTION PHENOTYPE</scope>
    <source>
        <strain>LT2</strain>
    </source>
</reference>
<reference key="6">
    <citation type="journal article" date="2012" name="PLoS ONE">
        <title>Engineered protein nano-compartments for targeted enzyme localization.</title>
        <authorList>
            <person name="Choudhary S."/>
            <person name="Quin M.B."/>
            <person name="Sanders M.A."/>
            <person name="Johnson E.T."/>
            <person name="Schmidt-Dannert C."/>
        </authorList>
    </citation>
    <scope>FUNCTION</scope>
    <scope>SUBCELLULAR LOCATION</scope>
    <scope>BIOTECHNOLOGY</scope>
    <source>
        <strain>LT2</strain>
    </source>
</reference>
<reference key="7">
    <citation type="journal article" date="2013" name="J. Bacteriol.">
        <title>Evidence that a metabolic microcompartment contains and recycles private cofactor pools.</title>
        <authorList>
            <person name="Huseby D.L."/>
            <person name="Roth J.R."/>
        </authorList>
    </citation>
    <scope>FUNCTION</scope>
    <scope>DISRUPTION PHENOTYPE</scope>
    <source>
        <strain>LT2</strain>
    </source>
</reference>
<reference key="8">
    <citation type="journal article" date="2016" name="Sci. Rep.">
        <title>Engineering formation of multiple recombinant Eut protein nanocompartments in E. coli.</title>
        <authorList>
            <person name="Held M."/>
            <person name="Kolb A."/>
            <person name="Perdue S."/>
            <person name="Hsu S.Y."/>
            <person name="Bloch S.E."/>
            <person name="Quin M.B."/>
            <person name="Schmidt-Dannert C."/>
        </authorList>
    </citation>
    <scope>FUNCTION</scope>
    <scope>IDENTIFICATION BY MASS SPECTROMETRY</scope>
    <scope>SUBCELLULAR LOCATION</scope>
    <scope>BIOTECHNOLOGY</scope>
    <source>
        <strain>LT2</strain>
    </source>
</reference>
<reference key="9">
    <citation type="journal article" date="2018" name="Infect. Immun.">
        <title>The Ethanolamine Permease EutH Promotes Vacuole Adaptation of Salmonella enterica and Listeria monocytogenes during Macrophage Infection.</title>
        <authorList>
            <person name="Anderson C.J."/>
            <person name="Satkovich J."/>
            <person name="Koeseoglu V.K."/>
            <person name="Agaisse H."/>
            <person name="Kendall M.M."/>
        </authorList>
    </citation>
    <scope>FUNCTION</scope>
    <source>
        <strain>SL1344</strain>
    </source>
</reference>
<accession>Q9ZFU8</accession>
<protein>
    <recommendedName>
        <fullName>Bacterial microcompartment shell protein EutK</fullName>
    </recommendedName>
    <alternativeName>
        <fullName>Ethanolamine utilization protein EutK</fullName>
    </alternativeName>
</protein>
<feature type="chain" id="PRO_0000004785" description="Bacterial microcompartment shell protein EutK">
    <location>
        <begin position="1"/>
        <end position="164"/>
    </location>
</feature>
<feature type="domain" description="BMC" evidence="2">
    <location>
        <begin position="4"/>
        <end position="88"/>
    </location>
</feature>
<feature type="domain" description="EutK-Ctail" evidence="3">
    <location>
        <begin position="108"/>
        <end position="164"/>
    </location>
</feature>
<feature type="sequence conflict" description="In Ref. 1; AAC78126." evidence="12" ref="1">
    <original>Q</original>
    <variation>K</variation>
    <location>
        <position position="65"/>
    </location>
</feature>
<feature type="sequence conflict" description="In Ref. 1; AAC78126." evidence="12" ref="1">
    <original>LR</original>
    <variation>FG</variation>
    <location>
        <begin position="153"/>
        <end position="154"/>
    </location>
</feature>
<gene>
    <name type="primary">eutK</name>
    <name type="ordered locus">STM2455</name>
</gene>
<comment type="function">
    <text evidence="7 9">A component of the bacterial microcompartment (BMC) shell dedicated to ethanolamine degradation. Expression of eutK, eutL, eutM, eutN, eutS (eutSMNLK) in E.coli leads to formation of a single BMC (PubMed:22428024, PubMed:27063436). Coexpression of eutQ with eutSMNLK permits E.coli to make cells with more than one mobile BMC, as is usual in vivo (PubMed:27063436).</text>
</comment>
<comment type="function">
    <text evidence="6 8 13 14 15">The ethanolamine (EA) catabolic bacterial microcompartment (BMC) probably concentrates low levels of ethanolamine catabolic enzymes, concentrates volatile reaction intermediates, keeps the level of toxic acetaldehyde low, generates enough acetyl-CoA to support cell growth, and maintains a pool of free coenzyme A (CoA) and NAD (Probable) (PubMed:16585748). Deletion of BMC genes (eutK, eutL, eutM) restores growth of eutD deletions, suggesting there are dedicated pools of coenzyme A (CoA) and NAD in the BMC (PubMed:23585538).</text>
</comment>
<comment type="function">
    <text evidence="10 11">Expression of the eut operon allows this bacteria to use ethanolamine as a carbon, nitrogen and energy source. It relies on cobalamin (vitamin B12) both as a cofactor for the ethanolamine ammonia-lyase (EAL) activity and to induce the operon (PubMed:3045078). EA enhances bacterial survival in macrophages in a concentration-dependent manner, suggesting it is an important nutrient during infection (PubMed:29531136).</text>
</comment>
<comment type="pathway">
    <text evidence="11">Amine and polyamine degradation; ethanolamine degradation.</text>
</comment>
<comment type="subunit">
    <text evidence="1">Monomeric in solution.</text>
</comment>
<comment type="subcellular location">
    <subcellularLocation>
        <location evidence="9">Bacterial microcompartment</location>
    </subcellularLocation>
</comment>
<comment type="induction">
    <text evidence="11">Part of the 17-gene eut operon transcribed from a single promoter, induced by ethanolamine and adenosylcobalamin (AdoCbl, vitamin B12).</text>
</comment>
<comment type="disruption phenotype">
    <text evidence="4 5 6">Not required for aerobic growth on ethanolamine (EA) supplemented with cobalamin (vitamin B12) (PubMed:10464203). A double eutL-eutK strain grows as well as wild-type on EA and cyanocobalamin, but a quadruple eutL-eutK eutM-eutN strain does not grow (PubMed:16291677). A non-polar deletion mutant grows on EA at pH 5.5 to pH 7.0 but not at pH 8.0 or pH 8.5, releases increased amounts of acetaldehyde on EA plus vitamin B12. Preventing acetaldehyde vapor loss allow growth up to pH 8.5 (PubMed:16585748).</text>
</comment>
<comment type="biotechnology">
    <text evidence="7 9">Artificial BMCs can be made in E.coli by expressing eutK, eutL, eutM, eutN, eutS (eutSMNLK) or eutS alone. Cargo proteins can be targeted to them and beta-galactosidase (lacZ) was active within the BMC, showing the BMC allows passage of substrate into the interior. This can lead to the development of tailored BMCs for specific metabolic reactions (PubMed:22428024, PubMed:27063436). The addition of eutQ to the eutSMNLK construct results in biogenesis of multiple BMCs (PubMed:27063436).</text>
</comment>
<comment type="miscellaneous">
    <text evidence="5">The need for a bacterial microcompartment in EA metabolism can be bypassed by increasing the levels of EAL and an acetaldehyde dehydrogenase (not necessarily EutE).</text>
</comment>
<comment type="similarity">
    <text evidence="2">Belongs to the bacterial microcompartments protein family.</text>
</comment>